<proteinExistence type="evidence at protein level"/>
<reference key="1">
    <citation type="journal article" date="1996" name="J. Cell Biol.">
        <title>Xenopus laevis actin-depolymerizing factor/cofilin: a phosphorylation-regulated protein essential for development.</title>
        <authorList>
            <person name="Abe H."/>
            <person name="Obinata T."/>
            <person name="Minamide L.S."/>
            <person name="Bamburg J.R."/>
        </authorList>
    </citation>
    <scope>NUCLEOTIDE SEQUENCE [MRNA]</scope>
    <scope>FUNCTION</scope>
    <scope>SUBCELLULAR LOCATION</scope>
    <scope>TISSUE SPECIFICITY</scope>
    <scope>DEVELOPMENTAL STAGE</scope>
    <scope>PHOSPHORYLATION</scope>
    <source>
        <tissue>Tail bud</tissue>
    </source>
</reference>
<reference key="2">
    <citation type="submission" date="1994-09" db="EMBL/GenBank/DDBJ databases">
        <authorList>
            <person name="Wada A."/>
            <person name="Gotoh Y."/>
            <person name="Nishida E."/>
        </authorList>
    </citation>
    <scope>NUCLEOTIDE SEQUENCE [MRNA]</scope>
    <source>
        <tissue>Oocyte</tissue>
    </source>
</reference>
<reference key="3">
    <citation type="submission" date="2003-01" db="EMBL/GenBank/DDBJ databases">
        <authorList>
            <consortium name="NIH - Xenopus Gene Collection (XGC) project"/>
        </authorList>
    </citation>
    <scope>NUCLEOTIDE SEQUENCE [LARGE SCALE MRNA]</scope>
    <source>
        <tissue>Tail bud</tissue>
    </source>
</reference>
<comment type="function">
    <text evidence="1 4">May play a role in the regulation of cell morphology and cytoskeletal organization (By similarity). Binds to F-actin and exhibits pH-sensitive F-actin depolymerizing activity. Required for formation of the cleavage furrow during cytokinesis.</text>
</comment>
<comment type="subcellular location">
    <subcellularLocation>
        <location evidence="1">Nucleus matrix</location>
    </subcellularLocation>
    <subcellularLocation>
        <location evidence="1">Cytoplasm</location>
        <location evidence="1">Cytoskeleton</location>
    </subcellularLocation>
    <subcellularLocation>
        <location evidence="4">Cytoplasm</location>
        <location evidence="4">Cell cortex</location>
    </subcellularLocation>
    <subcellularLocation>
        <location evidence="4">Membrane</location>
    </subcellularLocation>
    <text>Cellular localization varies throughout development and may be related to phosphorylation levels. Shows diffuse cortical cytoplasm localization in oocytes, with membrane-association increasing after fertilization, particularly in the vegetal hemisphere.</text>
</comment>
<comment type="tissue specificity">
    <text evidence="4">Expressed diffusely in both animal and vegetal hemispheres of the oocyte. During cleavage, expression accumulates around the cleavage furrow, along the vegetal membrane, and later in the midbody. Strongly expressed in the animal hemisphere during blastula stages, with most cells showing expression by gastrulation. By stage 17, expression is highest in cells of the developing neuroectoderm, and at stage 24 the notochord, neural tube, neural crest, somites and some cells of the archenteron show high expression. By stage 35, expression has declined in the notochord, but remains in the neural tube, epidermis and a layer of cells in the archenteron. Also highly expressed in the retina and neuronal cell bodies at the base of the cement gland but not the cement gland itself. At stage 38, expression is widespread, being highest in the nervous system and retina. In the adult, expression is high in the brain, heart, oocyte, stomach, and low in skeletal muscle.</text>
</comment>
<comment type="developmental stage">
    <text evidence="4">Expressed both maternally and zygotically. Maternal expression is gradually replaced with zygotic expression between the morula (stage 5) and tadpole (stage 34) stages.</text>
</comment>
<comment type="PTM">
    <text evidence="1">Inactive when phosphorylated. Phosphorylation levels vary during development. Oocytes contain only the phosphorylated form, and 80-95% of cfl1 protein is phosphorylated in unfertilized eggs. Rapid dephosphorylation occurs within 30 minutes after fertilization. Phosphorylation levels increase again between the morula and blastula stages (5-8 hpf) and then decrease again as gastrulation approaches. Dephosphorylated by pdxp (By similarity).</text>
</comment>
<comment type="similarity">
    <text evidence="5">Belongs to the actin-binding proteins ADF family.</text>
</comment>
<dbReference type="EMBL" id="U26269">
    <property type="protein sequence ID" value="AAB00539.1"/>
    <property type="molecule type" value="mRNA"/>
</dbReference>
<dbReference type="EMBL" id="D38406">
    <property type="protein sequence ID" value="BAA07461.1"/>
    <property type="molecule type" value="mRNA"/>
</dbReference>
<dbReference type="EMBL" id="BC043803">
    <property type="protein sequence ID" value="AAH43803.1"/>
    <property type="molecule type" value="mRNA"/>
</dbReference>
<dbReference type="RefSeq" id="NP_001079485.1">
    <property type="nucleotide sequence ID" value="NM_001086016.1"/>
</dbReference>
<dbReference type="SMR" id="P45593"/>
<dbReference type="BioGRID" id="97415">
    <property type="interactions" value="1"/>
</dbReference>
<dbReference type="DNASU" id="379172"/>
<dbReference type="GeneID" id="379172"/>
<dbReference type="KEGG" id="xla:379172"/>
<dbReference type="AGR" id="Xenbase:XB-GENE-6251620"/>
<dbReference type="CTD" id="379172"/>
<dbReference type="Xenbase" id="XB-GENE-6251620">
    <property type="gene designation" value="cfl1.S"/>
</dbReference>
<dbReference type="OMA" id="WSMIYAT"/>
<dbReference type="OrthoDB" id="10249245at2759"/>
<dbReference type="Proteomes" id="UP000186698">
    <property type="component" value="Chromosome 4S"/>
</dbReference>
<dbReference type="Bgee" id="379172">
    <property type="expression patterns" value="Expressed in blastula and 19 other cell types or tissues"/>
</dbReference>
<dbReference type="GO" id="GO:0015629">
    <property type="term" value="C:actin cytoskeleton"/>
    <property type="evidence" value="ECO:0000318"/>
    <property type="project" value="GO_Central"/>
</dbReference>
<dbReference type="GO" id="GO:0005938">
    <property type="term" value="C:cell cortex"/>
    <property type="evidence" value="ECO:0000314"/>
    <property type="project" value="UniProtKB"/>
</dbReference>
<dbReference type="GO" id="GO:0005737">
    <property type="term" value="C:cytoplasm"/>
    <property type="evidence" value="ECO:0000314"/>
    <property type="project" value="UniProtKB"/>
</dbReference>
<dbReference type="GO" id="GO:0016020">
    <property type="term" value="C:membrane"/>
    <property type="evidence" value="ECO:0000314"/>
    <property type="project" value="UniProtKB"/>
</dbReference>
<dbReference type="GO" id="GO:0030496">
    <property type="term" value="C:midbody"/>
    <property type="evidence" value="ECO:0000314"/>
    <property type="project" value="UniProtKB"/>
</dbReference>
<dbReference type="GO" id="GO:0016363">
    <property type="term" value="C:nuclear matrix"/>
    <property type="evidence" value="ECO:0007669"/>
    <property type="project" value="UniProtKB-SubCell"/>
</dbReference>
<dbReference type="GO" id="GO:0051015">
    <property type="term" value="F:actin filament binding"/>
    <property type="evidence" value="ECO:0000314"/>
    <property type="project" value="UniProtKB"/>
</dbReference>
<dbReference type="GO" id="GO:0030042">
    <property type="term" value="P:actin filament depolymerization"/>
    <property type="evidence" value="ECO:0000314"/>
    <property type="project" value="UniProtKB"/>
</dbReference>
<dbReference type="GO" id="GO:0030043">
    <property type="term" value="P:actin filament fragmentation"/>
    <property type="evidence" value="ECO:0000318"/>
    <property type="project" value="GO_Central"/>
</dbReference>
<dbReference type="GO" id="GO:0051014">
    <property type="term" value="P:actin filament severing"/>
    <property type="evidence" value="ECO:0000318"/>
    <property type="project" value="GO_Central"/>
</dbReference>
<dbReference type="GO" id="GO:0007010">
    <property type="term" value="P:cytoskeleton organization"/>
    <property type="evidence" value="ECO:0000250"/>
    <property type="project" value="UniProtKB"/>
</dbReference>
<dbReference type="GO" id="GO:0061640">
    <property type="term" value="P:cytoskeleton-dependent cytokinesis"/>
    <property type="evidence" value="ECO:0000315"/>
    <property type="project" value="UniProtKB"/>
</dbReference>
<dbReference type="GO" id="GO:0022604">
    <property type="term" value="P:regulation of cell morphogenesis"/>
    <property type="evidence" value="ECO:0000250"/>
    <property type="project" value="UniProtKB"/>
</dbReference>
<dbReference type="CDD" id="cd11286">
    <property type="entry name" value="ADF_cofilin_like"/>
    <property type="match status" value="1"/>
</dbReference>
<dbReference type="FunFam" id="3.40.20.10:FF:000010">
    <property type="entry name" value="Putative destrin"/>
    <property type="match status" value="1"/>
</dbReference>
<dbReference type="Gene3D" id="3.40.20.10">
    <property type="entry name" value="Severin"/>
    <property type="match status" value="1"/>
</dbReference>
<dbReference type="InterPro" id="IPR002108">
    <property type="entry name" value="ADF-H"/>
</dbReference>
<dbReference type="InterPro" id="IPR029006">
    <property type="entry name" value="ADF-H/Gelsolin-like_dom_sf"/>
</dbReference>
<dbReference type="InterPro" id="IPR017904">
    <property type="entry name" value="ADF/Cofilin"/>
</dbReference>
<dbReference type="PANTHER" id="PTHR11913">
    <property type="entry name" value="COFILIN-RELATED"/>
    <property type="match status" value="1"/>
</dbReference>
<dbReference type="Pfam" id="PF00241">
    <property type="entry name" value="Cofilin_ADF"/>
    <property type="match status" value="1"/>
</dbReference>
<dbReference type="PRINTS" id="PR00006">
    <property type="entry name" value="COFILIN"/>
</dbReference>
<dbReference type="SMART" id="SM00102">
    <property type="entry name" value="ADF"/>
    <property type="match status" value="1"/>
</dbReference>
<dbReference type="SUPFAM" id="SSF55753">
    <property type="entry name" value="Actin depolymerizing proteins"/>
    <property type="match status" value="1"/>
</dbReference>
<dbReference type="PROSITE" id="PS51263">
    <property type="entry name" value="ADF_H"/>
    <property type="match status" value="1"/>
</dbReference>
<accession>P45593</accession>
<accession>Q5D0C1</accession>
<organism>
    <name type="scientific">Xenopus laevis</name>
    <name type="common">African clawed frog</name>
    <dbReference type="NCBI Taxonomy" id="8355"/>
    <lineage>
        <taxon>Eukaryota</taxon>
        <taxon>Metazoa</taxon>
        <taxon>Chordata</taxon>
        <taxon>Craniata</taxon>
        <taxon>Vertebrata</taxon>
        <taxon>Euteleostomi</taxon>
        <taxon>Amphibia</taxon>
        <taxon>Batrachia</taxon>
        <taxon>Anura</taxon>
        <taxon>Pipoidea</taxon>
        <taxon>Pipidae</taxon>
        <taxon>Xenopodinae</taxon>
        <taxon>Xenopus</taxon>
        <taxon>Xenopus</taxon>
    </lineage>
</organism>
<name>COF1B_XENLA</name>
<keyword id="KW-0007">Acetylation</keyword>
<keyword id="KW-0009">Actin-binding</keyword>
<keyword id="KW-0963">Cytoplasm</keyword>
<keyword id="KW-0206">Cytoskeleton</keyword>
<keyword id="KW-0472">Membrane</keyword>
<keyword id="KW-0539">Nucleus</keyword>
<keyword id="KW-0597">Phosphoprotein</keyword>
<keyword id="KW-1185">Reference proteome</keyword>
<gene>
    <name type="primary">cfl1-b</name>
</gene>
<evidence type="ECO:0000250" key="1"/>
<evidence type="ECO:0000255" key="2"/>
<evidence type="ECO:0000255" key="3">
    <source>
        <dbReference type="PROSITE-ProRule" id="PRU00599"/>
    </source>
</evidence>
<evidence type="ECO:0000269" key="4">
    <source>
    </source>
</evidence>
<evidence type="ECO:0000305" key="5"/>
<feature type="initiator methionine" description="Removed" evidence="1">
    <location>
        <position position="1"/>
    </location>
</feature>
<feature type="chain" id="PRO_0000214905" description="Cofilin-1-B">
    <location>
        <begin position="2"/>
        <end position="168"/>
    </location>
</feature>
<feature type="domain" description="ADF-H" evidence="3">
    <location>
        <begin position="4"/>
        <end position="153"/>
    </location>
</feature>
<feature type="short sequence motif" description="Nuclear localization signal" evidence="2">
    <location>
        <begin position="30"/>
        <end position="34"/>
    </location>
</feature>
<feature type="modified residue" description="N-acetylalanine" evidence="1">
    <location>
        <position position="2"/>
    </location>
</feature>
<protein>
    <recommendedName>
        <fullName>Cofilin-1-B</fullName>
    </recommendedName>
    <alternativeName>
        <fullName>ADF/cofilin-2</fullName>
        <shortName>XAC2</shortName>
    </alternativeName>
</protein>
<sequence length="168" mass="19120">MASGVMVSDDVVKVFNDMKVRHQLSPEEAKKRKKAVIFCLSDDKKTIILEPGKEILQGDVGCNVEDPYKTFVKMLPRNDCRYALYDALYETKETKKEDLVFVFWAPEEASLKSKMIYASSKDAIRKRFTGIKHEWQTNTYDDINDPCNLADKLGGNTVVSLEGKSLRS</sequence>